<dbReference type="EMBL" id="AJ888457">
    <property type="protein sequence ID" value="CAI59878.1"/>
    <property type="molecule type" value="Genomic_DNA"/>
</dbReference>
<dbReference type="RefSeq" id="YP_319833.1">
    <property type="nucleotide sequence ID" value="NC_007409.1"/>
</dbReference>
<dbReference type="PDB" id="4ART">
    <property type="method" value="X-ray"/>
    <property type="resolution" value="2.15 A"/>
    <property type="chains" value="A/B=1-273"/>
</dbReference>
<dbReference type="PDB" id="4ATS">
    <property type="method" value="X-ray"/>
    <property type="resolution" value="3.85 A"/>
    <property type="chains" value="A=1-273"/>
</dbReference>
<dbReference type="PDBsum" id="4ART"/>
<dbReference type="PDBsum" id="4ATS"/>
<dbReference type="SMR" id="Q3V4T6"/>
<dbReference type="GeneID" id="4484280"/>
<dbReference type="KEGG" id="vg:4484280"/>
<dbReference type="Proteomes" id="UP000002150">
    <property type="component" value="Genome"/>
</dbReference>
<dbReference type="GO" id="GO:0044423">
    <property type="term" value="C:virion component"/>
    <property type="evidence" value="ECO:0007669"/>
    <property type="project" value="UniProtKB-KW"/>
</dbReference>
<dbReference type="InterPro" id="IPR048934">
    <property type="entry name" value="ATV_ORF273"/>
</dbReference>
<dbReference type="Pfam" id="PF20828">
    <property type="entry name" value="ATV_ORF273"/>
    <property type="match status" value="1"/>
</dbReference>
<accession>Q3V4T6</accession>
<evidence type="ECO:0007829" key="1">
    <source>
        <dbReference type="PDB" id="4ART"/>
    </source>
</evidence>
<sequence length="273" mass="32154">MGEKITEEREFQSISEIPEEEIDATNDEEKLADIVENEIEKEIRKSKTRKCKTIENFYYYILRDGKIYPASDYDIEVEKGKRSANDIYAFVETDVTRDFDEFLFDIDYGLPSISDILKFYLEKAGFRIANEVPTPNLKYYIHAVVEFGEDRPQYLAVNIYDIDSLARALRIPQIVEQKLGNKPRTITADEFNDIERIVAEEQPILAGYTYDEALRIPYHYYVDHNNSFKDDALKIAHAYLQLFPTPYQVCYEWKARWFNKIDCLKLERLKPSS</sequence>
<keyword id="KW-0002">3D-structure</keyword>
<keyword id="KW-1185">Reference proteome</keyword>
<keyword id="KW-0946">Virion</keyword>
<organismHost>
    <name type="scientific">Acidianus convivator</name>
    <dbReference type="NCBI Taxonomy" id="269667"/>
</organismHost>
<protein>
    <recommendedName>
        <fullName>Structural protein ORF273</fullName>
    </recommendedName>
</protein>
<comment type="subcellular location">
    <subcellularLocation>
        <location>Virion</location>
    </subcellularLocation>
</comment>
<name>Y273_ATV</name>
<proteinExistence type="evidence at protein level"/>
<organism>
    <name type="scientific">Acidianus two-tailed virus</name>
    <name type="common">ATV</name>
    <dbReference type="NCBI Taxonomy" id="315953"/>
    <lineage>
        <taxon>Viruses</taxon>
        <taxon>Viruses incertae sedis</taxon>
        <taxon>Bicaudaviridae</taxon>
        <taxon>Bicaudavirus</taxon>
    </lineage>
</organism>
<feature type="chain" id="PRO_0000389088" description="Structural protein ORF273">
    <location>
        <begin position="1"/>
        <end position="273"/>
    </location>
</feature>
<feature type="helix" evidence="1">
    <location>
        <begin position="23"/>
        <end position="44"/>
    </location>
</feature>
<feature type="strand" evidence="1">
    <location>
        <begin position="58"/>
        <end position="62"/>
    </location>
</feature>
<feature type="strand" evidence="1">
    <location>
        <begin position="67"/>
        <end position="69"/>
    </location>
</feature>
<feature type="helix" evidence="1">
    <location>
        <begin position="70"/>
        <end position="78"/>
    </location>
</feature>
<feature type="helix" evidence="1">
    <location>
        <begin position="84"/>
        <end position="86"/>
    </location>
</feature>
<feature type="strand" evidence="1">
    <location>
        <begin position="87"/>
        <end position="97"/>
    </location>
</feature>
<feature type="helix" evidence="1">
    <location>
        <begin position="99"/>
        <end position="108"/>
    </location>
</feature>
<feature type="helix" evidence="1">
    <location>
        <begin position="113"/>
        <end position="123"/>
    </location>
</feature>
<feature type="strand" evidence="1">
    <location>
        <begin position="139"/>
        <end position="146"/>
    </location>
</feature>
<feature type="strand" evidence="1">
    <location>
        <begin position="154"/>
        <end position="161"/>
    </location>
</feature>
<feature type="helix" evidence="1">
    <location>
        <begin position="162"/>
        <end position="168"/>
    </location>
</feature>
<feature type="helix" evidence="1">
    <location>
        <begin position="171"/>
        <end position="179"/>
    </location>
</feature>
<feature type="helix" evidence="1">
    <location>
        <begin position="188"/>
        <end position="200"/>
    </location>
</feature>
<feature type="helix" evidence="1">
    <location>
        <begin position="210"/>
        <end position="221"/>
    </location>
</feature>
<feature type="helix" evidence="1">
    <location>
        <begin position="226"/>
        <end position="228"/>
    </location>
</feature>
<feature type="helix" evidence="1">
    <location>
        <begin position="229"/>
        <end position="242"/>
    </location>
</feature>
<feature type="strand" evidence="1">
    <location>
        <begin position="247"/>
        <end position="253"/>
    </location>
</feature>
<feature type="strand" evidence="1">
    <location>
        <begin position="255"/>
        <end position="261"/>
    </location>
</feature>
<feature type="helix" evidence="1">
    <location>
        <begin position="263"/>
        <end position="266"/>
    </location>
</feature>
<reference key="1">
    <citation type="journal article" date="2005" name="Nature">
        <title>Virology: independent virus development outside a host.</title>
        <authorList>
            <person name="Haring M."/>
            <person name="Vestergaard G."/>
            <person name="Rachel R."/>
            <person name="Chen L."/>
            <person name="Garrett R.A."/>
            <person name="Prangishvili D."/>
        </authorList>
    </citation>
    <scope>NUCLEOTIDE SEQUENCE [GENOMIC DNA]</scope>
</reference>